<evidence type="ECO:0000255" key="1">
    <source>
        <dbReference type="HAMAP-Rule" id="MF_03140"/>
    </source>
</evidence>
<evidence type="ECO:0000256" key="2">
    <source>
        <dbReference type="SAM" id="MobiDB-lite"/>
    </source>
</evidence>
<proteinExistence type="inferred from homology"/>
<protein>
    <recommendedName>
        <fullName evidence="1">Flap endonuclease 1</fullName>
        <shortName evidence="1">FEN-1</shortName>
        <ecNumber evidence="1">3.1.-.-</ecNumber>
    </recommendedName>
    <alternativeName>
        <fullName evidence="1">Flap structure-specific endonuclease 1</fullName>
    </alternativeName>
</protein>
<comment type="function">
    <text evidence="1">Structure-specific nuclease with 5'-flap endonuclease and 5'-3' exonuclease activities involved in DNA replication and repair. During DNA replication, cleaves the 5'-overhanging flap structure that is generated by displacement synthesis when DNA polymerase encounters the 5'-end of a downstream Okazaki fragment. It enters the flap from the 5'-end and then tracks to cleave the flap base, leaving a nick for ligation. Also involved in the long patch base excision repair (LP-BER) pathway, by cleaving within the apurinic/apyrimidinic (AP) site-terminated flap. Acts as a genome stabilization factor that prevents flaps from equilibrating into structures that lead to duplications and deletions. Also possesses 5'-3' exonuclease activity on nicked or gapped double-stranded DNA, and exhibits RNase H activity. Also involved in replication and repair of rDNA and in repairing mitochondrial DNA.</text>
</comment>
<comment type="cofactor">
    <cofactor evidence="1">
        <name>Mg(2+)</name>
        <dbReference type="ChEBI" id="CHEBI:18420"/>
    </cofactor>
    <text evidence="1">Binds 2 magnesium ions per subunit. They probably participate in the reaction catalyzed by the enzyme. May bind an additional third magnesium ion after substrate binding.</text>
</comment>
<comment type="subunit">
    <text evidence="1">Interacts with PCNA. Three molecules of FEN1 bind to one PCNA trimer with each molecule binding to one PCNA monomer. PCNA stimulates the nuclease activity without altering cleavage specificity.</text>
</comment>
<comment type="subcellular location">
    <subcellularLocation>
        <location evidence="1">Nucleus</location>
        <location evidence="1">Nucleolus</location>
    </subcellularLocation>
    <subcellularLocation>
        <location evidence="1">Nucleus</location>
        <location evidence="1">Nucleoplasm</location>
    </subcellularLocation>
    <subcellularLocation>
        <location evidence="1">Mitochondrion</location>
    </subcellularLocation>
    <text evidence="1">Resides mostly in the nucleoli and relocalizes to the nucleoplasm upon DNA damage.</text>
</comment>
<comment type="PTM">
    <text evidence="1">Phosphorylated. Phosphorylation upon DNA damage induces relocalization to the nuclear plasma.</text>
</comment>
<comment type="similarity">
    <text evidence="1">Belongs to the XPG/RAD2 endonuclease family. FEN1 subfamily.</text>
</comment>
<organism>
    <name type="scientific">Mycosarcoma maydis</name>
    <name type="common">Corn smut fungus</name>
    <name type="synonym">Ustilago maydis</name>
    <dbReference type="NCBI Taxonomy" id="5270"/>
    <lineage>
        <taxon>Eukaryota</taxon>
        <taxon>Fungi</taxon>
        <taxon>Dikarya</taxon>
        <taxon>Basidiomycota</taxon>
        <taxon>Ustilaginomycotina</taxon>
        <taxon>Ustilaginomycetes</taxon>
        <taxon>Ustilaginales</taxon>
        <taxon>Ustilaginaceae</taxon>
        <taxon>Mycosarcoma</taxon>
    </lineage>
</organism>
<sequence>MGIKGLTALISDEAPGAIKEMEIKTYFGRKVAIDASMSLYQFLIAVRQNDGQQLMTESGETTSHLLGFFYRTLRMIDYGIKPMYVFDGTPPDLKKELLQKRFGRREEAREQEEEQKDVADAEKMDQLARRQVRPTRQHNEEVRHLLKLMGIPCVIAPSEAEAQCAELARAGKVYAAGSEDMDTLTFGTPILLKHLTASEQKKLPVHQVDLAKALEGLQMTMAQFIDLCILLGCDYLDPIKGIGPKTALKLIREHKTLENVVHHLKEDGKKSVQIPDHWPFQEARKIFESPDVQKGVDLDLKWEAPDVEAMVKFLCQDKGFSEDRVRKGCEKLQKSLSQKQQGRLDGFFTVKPGSAPPKRKAEDDKKNVKKKGKK</sequence>
<feature type="chain" id="PRO_0000403604" description="Flap endonuclease 1">
    <location>
        <begin position="1"/>
        <end position="374"/>
    </location>
</feature>
<feature type="region of interest" description="N-domain">
    <location>
        <begin position="1"/>
        <end position="105"/>
    </location>
</feature>
<feature type="region of interest" description="Disordered" evidence="2">
    <location>
        <begin position="103"/>
        <end position="122"/>
    </location>
</feature>
<feature type="region of interest" description="I-domain">
    <location>
        <begin position="123"/>
        <end position="254"/>
    </location>
</feature>
<feature type="region of interest" description="Disordered" evidence="2">
    <location>
        <begin position="335"/>
        <end position="374"/>
    </location>
</feature>
<feature type="region of interest" description="Interaction with PCNA" evidence="1">
    <location>
        <begin position="340"/>
        <end position="348"/>
    </location>
</feature>
<feature type="binding site" evidence="1">
    <location>
        <position position="34"/>
    </location>
    <ligand>
        <name>Mg(2+)</name>
        <dbReference type="ChEBI" id="CHEBI:18420"/>
        <label>1</label>
    </ligand>
</feature>
<feature type="binding site" evidence="1">
    <location>
        <position position="47"/>
    </location>
    <ligand>
        <name>DNA</name>
        <dbReference type="ChEBI" id="CHEBI:16991"/>
    </ligand>
</feature>
<feature type="binding site" evidence="1">
    <location>
        <position position="71"/>
    </location>
    <ligand>
        <name>DNA</name>
        <dbReference type="ChEBI" id="CHEBI:16991"/>
    </ligand>
</feature>
<feature type="binding site" evidence="1">
    <location>
        <position position="87"/>
    </location>
    <ligand>
        <name>Mg(2+)</name>
        <dbReference type="ChEBI" id="CHEBI:18420"/>
        <label>1</label>
    </ligand>
</feature>
<feature type="binding site" evidence="1">
    <location>
        <position position="159"/>
    </location>
    <ligand>
        <name>DNA</name>
        <dbReference type="ChEBI" id="CHEBI:16991"/>
    </ligand>
</feature>
<feature type="binding site" evidence="1">
    <location>
        <position position="159"/>
    </location>
    <ligand>
        <name>Mg(2+)</name>
        <dbReference type="ChEBI" id="CHEBI:18420"/>
        <label>1</label>
    </ligand>
</feature>
<feature type="binding site" evidence="1">
    <location>
        <position position="161"/>
    </location>
    <ligand>
        <name>Mg(2+)</name>
        <dbReference type="ChEBI" id="CHEBI:18420"/>
        <label>1</label>
    </ligand>
</feature>
<feature type="binding site" evidence="1">
    <location>
        <position position="180"/>
    </location>
    <ligand>
        <name>Mg(2+)</name>
        <dbReference type="ChEBI" id="CHEBI:18420"/>
        <label>2</label>
    </ligand>
</feature>
<feature type="binding site" evidence="1">
    <location>
        <position position="182"/>
    </location>
    <ligand>
        <name>Mg(2+)</name>
        <dbReference type="ChEBI" id="CHEBI:18420"/>
        <label>2</label>
    </ligand>
</feature>
<feature type="binding site" evidence="1">
    <location>
        <position position="232"/>
    </location>
    <ligand>
        <name>DNA</name>
        <dbReference type="ChEBI" id="CHEBI:16991"/>
    </ligand>
</feature>
<feature type="binding site" evidence="1">
    <location>
        <position position="234"/>
    </location>
    <ligand>
        <name>DNA</name>
        <dbReference type="ChEBI" id="CHEBI:16991"/>
    </ligand>
</feature>
<feature type="binding site" evidence="1">
    <location>
        <position position="234"/>
    </location>
    <ligand>
        <name>Mg(2+)</name>
        <dbReference type="ChEBI" id="CHEBI:18420"/>
        <label>2</label>
    </ligand>
</feature>
<gene>
    <name evidence="1" type="primary">FEN1</name>
    <name type="ORF">UMAG_05912</name>
</gene>
<keyword id="KW-0227">DNA damage</keyword>
<keyword id="KW-0234">DNA repair</keyword>
<keyword id="KW-0235">DNA replication</keyword>
<keyword id="KW-0255">Endonuclease</keyword>
<keyword id="KW-0269">Exonuclease</keyword>
<keyword id="KW-0378">Hydrolase</keyword>
<keyword id="KW-0460">Magnesium</keyword>
<keyword id="KW-0479">Metal-binding</keyword>
<keyword id="KW-0496">Mitochondrion</keyword>
<keyword id="KW-0540">Nuclease</keyword>
<keyword id="KW-0539">Nucleus</keyword>
<keyword id="KW-0597">Phosphoprotein</keyword>
<keyword id="KW-1185">Reference proteome</keyword>
<dbReference type="EC" id="3.1.-.-" evidence="1"/>
<dbReference type="EMBL" id="CM003159">
    <property type="protein sequence ID" value="KIS66173.1"/>
    <property type="molecule type" value="Genomic_DNA"/>
</dbReference>
<dbReference type="RefSeq" id="XP_011392252.1">
    <property type="nucleotide sequence ID" value="XM_011393950.1"/>
</dbReference>
<dbReference type="SMR" id="Q4P1V1"/>
<dbReference type="FunCoup" id="Q4P1V1">
    <property type="interactions" value="712"/>
</dbReference>
<dbReference type="STRING" id="237631.Q4P1V1"/>
<dbReference type="EnsemblFungi" id="KIS66173">
    <property type="protein sequence ID" value="KIS66173"/>
    <property type="gene ID" value="UMAG_05912"/>
</dbReference>
<dbReference type="GeneID" id="23565666"/>
<dbReference type="KEGG" id="uma:UMAG_05912"/>
<dbReference type="VEuPathDB" id="FungiDB:UMAG_05912"/>
<dbReference type="eggNOG" id="KOG2519">
    <property type="taxonomic scope" value="Eukaryota"/>
</dbReference>
<dbReference type="HOGENOM" id="CLU_032444_2_0_1"/>
<dbReference type="InParanoid" id="Q4P1V1"/>
<dbReference type="OMA" id="MGIPWVQ"/>
<dbReference type="OrthoDB" id="1937206at2759"/>
<dbReference type="Proteomes" id="UP000000561">
    <property type="component" value="Chromosome 20"/>
</dbReference>
<dbReference type="GO" id="GO:0005737">
    <property type="term" value="C:cytoplasm"/>
    <property type="evidence" value="ECO:0000318"/>
    <property type="project" value="GO_Central"/>
</dbReference>
<dbReference type="GO" id="GO:0005829">
    <property type="term" value="C:cytosol"/>
    <property type="evidence" value="ECO:0007669"/>
    <property type="project" value="EnsemblFungi"/>
</dbReference>
<dbReference type="GO" id="GO:0005739">
    <property type="term" value="C:mitochondrion"/>
    <property type="evidence" value="ECO:0007669"/>
    <property type="project" value="UniProtKB-SubCell"/>
</dbReference>
<dbReference type="GO" id="GO:0005730">
    <property type="term" value="C:nucleolus"/>
    <property type="evidence" value="ECO:0007669"/>
    <property type="project" value="UniProtKB-SubCell"/>
</dbReference>
<dbReference type="GO" id="GO:0005654">
    <property type="term" value="C:nucleoplasm"/>
    <property type="evidence" value="ECO:0007669"/>
    <property type="project" value="UniProtKB-SubCell"/>
</dbReference>
<dbReference type="GO" id="GO:0005634">
    <property type="term" value="C:nucleus"/>
    <property type="evidence" value="ECO:0000318"/>
    <property type="project" value="GO_Central"/>
</dbReference>
<dbReference type="GO" id="GO:0008409">
    <property type="term" value="F:5'-3' exonuclease activity"/>
    <property type="evidence" value="ECO:0000318"/>
    <property type="project" value="GO_Central"/>
</dbReference>
<dbReference type="GO" id="GO:0017108">
    <property type="term" value="F:5'-flap endonuclease activity"/>
    <property type="evidence" value="ECO:0000318"/>
    <property type="project" value="GO_Central"/>
</dbReference>
<dbReference type="GO" id="GO:0003677">
    <property type="term" value="F:DNA binding"/>
    <property type="evidence" value="ECO:0007669"/>
    <property type="project" value="UniProtKB-UniRule"/>
</dbReference>
<dbReference type="GO" id="GO:0000287">
    <property type="term" value="F:magnesium ion binding"/>
    <property type="evidence" value="ECO:0007669"/>
    <property type="project" value="UniProtKB-UniRule"/>
</dbReference>
<dbReference type="GO" id="GO:0006284">
    <property type="term" value="P:base-excision repair"/>
    <property type="evidence" value="ECO:0007669"/>
    <property type="project" value="UniProtKB-UniRule"/>
</dbReference>
<dbReference type="GO" id="GO:0043137">
    <property type="term" value="P:DNA replication, removal of RNA primer"/>
    <property type="evidence" value="ECO:0007669"/>
    <property type="project" value="UniProtKB-UniRule"/>
</dbReference>
<dbReference type="GO" id="GO:0006303">
    <property type="term" value="P:double-strand break repair via nonhomologous end joining"/>
    <property type="evidence" value="ECO:0007669"/>
    <property type="project" value="EnsemblFungi"/>
</dbReference>
<dbReference type="GO" id="GO:0007534">
    <property type="term" value="P:gene conversion at mating-type locus"/>
    <property type="evidence" value="ECO:0007669"/>
    <property type="project" value="EnsemblFungi"/>
</dbReference>
<dbReference type="GO" id="GO:0035753">
    <property type="term" value="P:maintenance of DNA trinucleotide repeats"/>
    <property type="evidence" value="ECO:0007669"/>
    <property type="project" value="EnsemblFungi"/>
</dbReference>
<dbReference type="CDD" id="cd09907">
    <property type="entry name" value="H3TH_FEN1-Euk"/>
    <property type="match status" value="1"/>
</dbReference>
<dbReference type="CDD" id="cd09867">
    <property type="entry name" value="PIN_FEN1"/>
    <property type="match status" value="1"/>
</dbReference>
<dbReference type="FunFam" id="1.10.150.20:FF:000009">
    <property type="entry name" value="Flap endonuclease 1"/>
    <property type="match status" value="1"/>
</dbReference>
<dbReference type="FunFam" id="3.40.50.1010:FF:000066">
    <property type="entry name" value="Flap endonuclease 1"/>
    <property type="match status" value="1"/>
</dbReference>
<dbReference type="Gene3D" id="1.10.150.20">
    <property type="entry name" value="5' to 3' exonuclease, C-terminal subdomain"/>
    <property type="match status" value="1"/>
</dbReference>
<dbReference type="Gene3D" id="3.40.50.1010">
    <property type="entry name" value="5'-nuclease"/>
    <property type="match status" value="1"/>
</dbReference>
<dbReference type="HAMAP" id="MF_00614">
    <property type="entry name" value="Fen"/>
    <property type="match status" value="1"/>
</dbReference>
<dbReference type="InterPro" id="IPR036279">
    <property type="entry name" value="5-3_exonuclease_C_sf"/>
</dbReference>
<dbReference type="InterPro" id="IPR023426">
    <property type="entry name" value="Flap_endonuc"/>
</dbReference>
<dbReference type="InterPro" id="IPR008918">
    <property type="entry name" value="HhH2"/>
</dbReference>
<dbReference type="InterPro" id="IPR029060">
    <property type="entry name" value="PIN-like_dom_sf"/>
</dbReference>
<dbReference type="InterPro" id="IPR006086">
    <property type="entry name" value="XPG-I_dom"/>
</dbReference>
<dbReference type="InterPro" id="IPR006084">
    <property type="entry name" value="XPG/Rad2"/>
</dbReference>
<dbReference type="InterPro" id="IPR019974">
    <property type="entry name" value="XPG_CS"/>
</dbReference>
<dbReference type="InterPro" id="IPR006085">
    <property type="entry name" value="XPG_DNA_repair_N"/>
</dbReference>
<dbReference type="PANTHER" id="PTHR11081:SF9">
    <property type="entry name" value="FLAP ENDONUCLEASE 1"/>
    <property type="match status" value="1"/>
</dbReference>
<dbReference type="PANTHER" id="PTHR11081">
    <property type="entry name" value="FLAP ENDONUCLEASE FAMILY MEMBER"/>
    <property type="match status" value="1"/>
</dbReference>
<dbReference type="Pfam" id="PF00867">
    <property type="entry name" value="XPG_I"/>
    <property type="match status" value="1"/>
</dbReference>
<dbReference type="Pfam" id="PF00752">
    <property type="entry name" value="XPG_N"/>
    <property type="match status" value="1"/>
</dbReference>
<dbReference type="PRINTS" id="PR00853">
    <property type="entry name" value="XPGRADSUPER"/>
</dbReference>
<dbReference type="SMART" id="SM00279">
    <property type="entry name" value="HhH2"/>
    <property type="match status" value="1"/>
</dbReference>
<dbReference type="SMART" id="SM00484">
    <property type="entry name" value="XPGI"/>
    <property type="match status" value="1"/>
</dbReference>
<dbReference type="SMART" id="SM00485">
    <property type="entry name" value="XPGN"/>
    <property type="match status" value="1"/>
</dbReference>
<dbReference type="SUPFAM" id="SSF47807">
    <property type="entry name" value="5' to 3' exonuclease, C-terminal subdomain"/>
    <property type="match status" value="1"/>
</dbReference>
<dbReference type="SUPFAM" id="SSF88723">
    <property type="entry name" value="PIN domain-like"/>
    <property type="match status" value="1"/>
</dbReference>
<dbReference type="PROSITE" id="PS00841">
    <property type="entry name" value="XPG_1"/>
    <property type="match status" value="1"/>
</dbReference>
<dbReference type="PROSITE" id="PS00842">
    <property type="entry name" value="XPG_2"/>
    <property type="match status" value="1"/>
</dbReference>
<accession>Q4P1V1</accession>
<accession>A0A0D1CGS8</accession>
<reference key="1">
    <citation type="journal article" date="2006" name="Nature">
        <title>Insights from the genome of the biotrophic fungal plant pathogen Ustilago maydis.</title>
        <authorList>
            <person name="Kaemper J."/>
            <person name="Kahmann R."/>
            <person name="Boelker M."/>
            <person name="Ma L.-J."/>
            <person name="Brefort T."/>
            <person name="Saville B.J."/>
            <person name="Banuett F."/>
            <person name="Kronstad J.W."/>
            <person name="Gold S.E."/>
            <person name="Mueller O."/>
            <person name="Perlin M.H."/>
            <person name="Woesten H.A.B."/>
            <person name="de Vries R."/>
            <person name="Ruiz-Herrera J."/>
            <person name="Reynaga-Pena C.G."/>
            <person name="Snetselaar K."/>
            <person name="McCann M."/>
            <person name="Perez-Martin J."/>
            <person name="Feldbruegge M."/>
            <person name="Basse C.W."/>
            <person name="Steinberg G."/>
            <person name="Ibeas J.I."/>
            <person name="Holloman W."/>
            <person name="Guzman P."/>
            <person name="Farman M.L."/>
            <person name="Stajich J.E."/>
            <person name="Sentandreu R."/>
            <person name="Gonzalez-Prieto J.M."/>
            <person name="Kennell J.C."/>
            <person name="Molina L."/>
            <person name="Schirawski J."/>
            <person name="Mendoza-Mendoza A."/>
            <person name="Greilinger D."/>
            <person name="Muench K."/>
            <person name="Roessel N."/>
            <person name="Scherer M."/>
            <person name="Vranes M."/>
            <person name="Ladendorf O."/>
            <person name="Vincon V."/>
            <person name="Fuchs U."/>
            <person name="Sandrock B."/>
            <person name="Meng S."/>
            <person name="Ho E.C.H."/>
            <person name="Cahill M.J."/>
            <person name="Boyce K.J."/>
            <person name="Klose J."/>
            <person name="Klosterman S.J."/>
            <person name="Deelstra H.J."/>
            <person name="Ortiz-Castellanos L."/>
            <person name="Li W."/>
            <person name="Sanchez-Alonso P."/>
            <person name="Schreier P.H."/>
            <person name="Haeuser-Hahn I."/>
            <person name="Vaupel M."/>
            <person name="Koopmann E."/>
            <person name="Friedrich G."/>
            <person name="Voss H."/>
            <person name="Schlueter T."/>
            <person name="Margolis J."/>
            <person name="Platt D."/>
            <person name="Swimmer C."/>
            <person name="Gnirke A."/>
            <person name="Chen F."/>
            <person name="Vysotskaia V."/>
            <person name="Mannhaupt G."/>
            <person name="Gueldener U."/>
            <person name="Muensterkoetter M."/>
            <person name="Haase D."/>
            <person name="Oesterheld M."/>
            <person name="Mewes H.-W."/>
            <person name="Mauceli E.W."/>
            <person name="DeCaprio D."/>
            <person name="Wade C.M."/>
            <person name="Butler J."/>
            <person name="Young S.K."/>
            <person name="Jaffe D.B."/>
            <person name="Calvo S.E."/>
            <person name="Nusbaum C."/>
            <person name="Galagan J.E."/>
            <person name="Birren B.W."/>
        </authorList>
    </citation>
    <scope>NUCLEOTIDE SEQUENCE [LARGE SCALE GENOMIC DNA]</scope>
    <source>
        <strain>DSM 14603 / FGSC 9021 / UM521</strain>
    </source>
</reference>
<reference key="2">
    <citation type="submission" date="2014-09" db="EMBL/GenBank/DDBJ databases">
        <authorList>
            <person name="Gueldener U."/>
            <person name="Muensterkoetter M."/>
            <person name="Walter M.C."/>
            <person name="Mannhaupt G."/>
            <person name="Kahmann R."/>
        </authorList>
    </citation>
    <scope>GENOME REANNOTATION</scope>
    <source>
        <strain>DSM 14603 / FGSC 9021 / UM521</strain>
    </source>
</reference>
<name>FEN1_MYCMD</name>